<sequence length="91" mass="9611">MKKLFAALALAAVVAPVWAATQTVTLSVPGMTCASCPITVKHALSKVEGVSKTDVSFDKRQAVVTFDDAKTNVQKLTKATEDAGYPSSLKR</sequence>
<keyword id="KW-0475">Mercuric resistance</keyword>
<keyword id="KW-0476">Mercury</keyword>
<keyword id="KW-0479">Metal-binding</keyword>
<keyword id="KW-0574">Periplasm</keyword>
<keyword id="KW-0614">Plasmid</keyword>
<keyword id="KW-0732">Signal</keyword>
<proteinExistence type="inferred from homology"/>
<organism>
    <name type="scientific">Enterobacter cloacae</name>
    <dbReference type="NCBI Taxonomy" id="550"/>
    <lineage>
        <taxon>Bacteria</taxon>
        <taxon>Pseudomonadati</taxon>
        <taxon>Pseudomonadota</taxon>
        <taxon>Gammaproteobacteria</taxon>
        <taxon>Enterobacterales</taxon>
        <taxon>Enterobacteriaceae</taxon>
        <taxon>Enterobacter</taxon>
        <taxon>Enterobacter cloacae complex</taxon>
    </lineage>
</organism>
<gene>
    <name type="primary">merP</name>
</gene>
<feature type="signal peptide" evidence="3">
    <location>
        <begin position="1"/>
        <end position="19"/>
    </location>
</feature>
<feature type="chain" id="PRO_0000021673" description="Mercuric transport protein periplasmic component">
    <location>
        <begin position="20"/>
        <end position="91"/>
    </location>
</feature>
<feature type="domain" description="HMA" evidence="4">
    <location>
        <begin position="22"/>
        <end position="88"/>
    </location>
</feature>
<feature type="binding site" evidence="4">
    <location>
        <position position="33"/>
    </location>
    <ligand>
        <name>Hg(2+)</name>
        <dbReference type="ChEBI" id="CHEBI:16793"/>
    </ligand>
</feature>
<feature type="binding site" evidence="4">
    <location>
        <position position="36"/>
    </location>
    <ligand>
        <name>Hg(2+)</name>
        <dbReference type="ChEBI" id="CHEBI:16793"/>
    </ligand>
</feature>
<dbReference type="EMBL" id="Y09025">
    <property type="protein sequence ID" value="CAA70229.1"/>
    <property type="molecule type" value="Genomic_DNA"/>
</dbReference>
<dbReference type="RefSeq" id="WP_000732275.1">
    <property type="nucleotide sequence ID" value="NZ_QMDH01000032.1"/>
</dbReference>
<dbReference type="RefSeq" id="YP_002791362.1">
    <property type="nucleotide sequence ID" value="NC_012555.1"/>
</dbReference>
<dbReference type="RefSeq" id="YP_002791672.1">
    <property type="nucleotide sequence ID" value="NC_012556.1"/>
</dbReference>
<dbReference type="RefSeq" id="YP_009328663.1">
    <property type="nucleotide sequence ID" value="NC_032101.1"/>
</dbReference>
<dbReference type="SMR" id="P0A218"/>
<dbReference type="GeneID" id="93157625"/>
<dbReference type="GO" id="GO:0042597">
    <property type="term" value="C:periplasmic space"/>
    <property type="evidence" value="ECO:0007669"/>
    <property type="project" value="UniProtKB-SubCell"/>
</dbReference>
<dbReference type="GO" id="GO:0045340">
    <property type="term" value="F:mercury ion binding"/>
    <property type="evidence" value="ECO:0007669"/>
    <property type="project" value="InterPro"/>
</dbReference>
<dbReference type="GO" id="GO:0015097">
    <property type="term" value="F:mercury ion transmembrane transporter activity"/>
    <property type="evidence" value="ECO:0007669"/>
    <property type="project" value="InterPro"/>
</dbReference>
<dbReference type="CDD" id="cd00371">
    <property type="entry name" value="HMA"/>
    <property type="match status" value="1"/>
</dbReference>
<dbReference type="FunFam" id="3.30.70.100:FF:000005">
    <property type="entry name" value="Copper-exporting P-type ATPase A"/>
    <property type="match status" value="1"/>
</dbReference>
<dbReference type="Gene3D" id="3.30.70.100">
    <property type="match status" value="1"/>
</dbReference>
<dbReference type="InterPro" id="IPR017969">
    <property type="entry name" value="Heavy-metal-associated_CS"/>
</dbReference>
<dbReference type="InterPro" id="IPR006121">
    <property type="entry name" value="HMA_dom"/>
</dbReference>
<dbReference type="InterPro" id="IPR036163">
    <property type="entry name" value="HMA_dom_sf"/>
</dbReference>
<dbReference type="InterPro" id="IPR011795">
    <property type="entry name" value="MerP"/>
</dbReference>
<dbReference type="InterPro" id="IPR001802">
    <property type="entry name" value="MerP/CopZ"/>
</dbReference>
<dbReference type="NCBIfam" id="TIGR02052">
    <property type="entry name" value="MerP"/>
    <property type="match status" value="1"/>
</dbReference>
<dbReference type="PANTHER" id="PTHR46594">
    <property type="entry name" value="P-TYPE CATION-TRANSPORTING ATPASE"/>
    <property type="match status" value="1"/>
</dbReference>
<dbReference type="PANTHER" id="PTHR46594:SF4">
    <property type="entry name" value="P-TYPE CATION-TRANSPORTING ATPASE"/>
    <property type="match status" value="1"/>
</dbReference>
<dbReference type="Pfam" id="PF00403">
    <property type="entry name" value="HMA"/>
    <property type="match status" value="1"/>
</dbReference>
<dbReference type="PRINTS" id="PR00946">
    <property type="entry name" value="HGSCAVENGER"/>
</dbReference>
<dbReference type="SUPFAM" id="SSF55008">
    <property type="entry name" value="HMA, heavy metal-associated domain"/>
    <property type="match status" value="1"/>
</dbReference>
<dbReference type="PROSITE" id="PS01047">
    <property type="entry name" value="HMA_1"/>
    <property type="match status" value="1"/>
</dbReference>
<dbReference type="PROSITE" id="PS50846">
    <property type="entry name" value="HMA_2"/>
    <property type="match status" value="1"/>
</dbReference>
<geneLocation type="plasmid">
    <name>pKLH256</name>
</geneLocation>
<name>MERP_ENTCL</name>
<comment type="function">
    <text evidence="1">Involved in mercury resistance. Acts as a mercury scavenger that specifically binds to a mercuric ion in the periplasm and probably passes it to the cytoplasmic mercuric reductase MerA via the mercuric transport protein MerT.</text>
</comment>
<comment type="subunit">
    <text evidence="2">Monomer.</text>
</comment>
<comment type="subcellular location">
    <subcellularLocation>
        <location evidence="2">Periplasm</location>
    </subcellularLocation>
</comment>
<comment type="similarity">
    <text evidence="5">Belongs to the MerP family.</text>
</comment>
<reference key="1">
    <citation type="journal article" date="1997" name="Mol. Microbiol.">
        <title>Intercontinental spread of promiscuous mercury-resistance transposons in environmental bacteria.</title>
        <authorList>
            <person name="Yurieva O."/>
            <person name="Kholodii G."/>
            <person name="Minakhin L."/>
            <person name="Gorlenko Z."/>
            <person name="Kalyaeva E."/>
            <person name="Mindlin S."/>
            <person name="Nikiforov V."/>
        </authorList>
    </citation>
    <scope>NUCLEOTIDE SEQUENCE [GENOMIC DNA]</scope>
    <source>
        <strain>TC256</strain>
        <transposon>Tn5036</transposon>
    </source>
</reference>
<accession>P0A218</accession>
<accession>O08125</accession>
<accession>P94701</accession>
<protein>
    <recommendedName>
        <fullName evidence="1">Mercuric transport protein periplasmic component</fullName>
    </recommendedName>
    <alternativeName>
        <fullName evidence="1">Mercury scavenger protein</fullName>
    </alternativeName>
    <alternativeName>
        <fullName evidence="1">Periplasmic mercury ion-binding protein</fullName>
    </alternativeName>
</protein>
<evidence type="ECO:0000250" key="1">
    <source>
        <dbReference type="UniProtKB" id="P04129"/>
    </source>
</evidence>
<evidence type="ECO:0000250" key="2">
    <source>
        <dbReference type="UniProtKB" id="P13113"/>
    </source>
</evidence>
<evidence type="ECO:0000255" key="3"/>
<evidence type="ECO:0000255" key="4">
    <source>
        <dbReference type="PROSITE-ProRule" id="PRU00280"/>
    </source>
</evidence>
<evidence type="ECO:0000305" key="5"/>